<dbReference type="EMBL" id="CM000071">
    <property type="protein sequence ID" value="EAL26616.2"/>
    <property type="status" value="ALT_SEQ"/>
    <property type="molecule type" value="Genomic_DNA"/>
</dbReference>
<dbReference type="RefSeq" id="XP_004444576.1">
    <property type="nucleotide sequence ID" value="XM_004444519.2"/>
</dbReference>
<dbReference type="SMR" id="Q28WQ1"/>
<dbReference type="FunCoup" id="Q28WQ1">
    <property type="interactions" value="178"/>
</dbReference>
<dbReference type="STRING" id="46245.Q28WQ1"/>
<dbReference type="EnsemblMetazoa" id="FBtr0334361">
    <property type="protein sequence ID" value="FBpp0306467"/>
    <property type="gene ID" value="FBgn0081156"/>
</dbReference>
<dbReference type="GeneID" id="4805677"/>
<dbReference type="KEGG" id="dpo:4805677"/>
<dbReference type="CTD" id="36876"/>
<dbReference type="eggNOG" id="KOG0245">
    <property type="taxonomic scope" value="Eukaryota"/>
</dbReference>
<dbReference type="HOGENOM" id="CLU_001485_10_0_1"/>
<dbReference type="InParanoid" id="Q28WQ1"/>
<dbReference type="PhylomeDB" id="Q28WQ1"/>
<dbReference type="Proteomes" id="UP000001819">
    <property type="component" value="Chromosome 3"/>
</dbReference>
<dbReference type="Bgee" id="FBgn0081156">
    <property type="expression patterns" value="Expressed in insect adult head and 2 other cell types or tissues"/>
</dbReference>
<dbReference type="ExpressionAtlas" id="Q28WQ1">
    <property type="expression patterns" value="baseline"/>
</dbReference>
<dbReference type="GO" id="GO:0005737">
    <property type="term" value="C:cytoplasm"/>
    <property type="evidence" value="ECO:0007669"/>
    <property type="project" value="UniProtKB-KW"/>
</dbReference>
<dbReference type="GO" id="GO:0005874">
    <property type="term" value="C:microtubule"/>
    <property type="evidence" value="ECO:0007669"/>
    <property type="project" value="UniProtKB-KW"/>
</dbReference>
<dbReference type="GO" id="GO:0005875">
    <property type="term" value="C:microtubule associated complex"/>
    <property type="evidence" value="ECO:0000250"/>
    <property type="project" value="UniProtKB"/>
</dbReference>
<dbReference type="GO" id="GO:0005524">
    <property type="term" value="F:ATP binding"/>
    <property type="evidence" value="ECO:0007669"/>
    <property type="project" value="UniProtKB-KW"/>
</dbReference>
<dbReference type="GO" id="GO:0008017">
    <property type="term" value="F:microtubule binding"/>
    <property type="evidence" value="ECO:0007669"/>
    <property type="project" value="InterPro"/>
</dbReference>
<dbReference type="GO" id="GO:0003777">
    <property type="term" value="F:microtubule motor activity"/>
    <property type="evidence" value="ECO:0007669"/>
    <property type="project" value="InterPro"/>
</dbReference>
<dbReference type="GO" id="GO:0048489">
    <property type="term" value="P:synaptic vesicle transport"/>
    <property type="evidence" value="ECO:0000250"/>
    <property type="project" value="UniProtKB"/>
</dbReference>
<dbReference type="GO" id="GO:0047496">
    <property type="term" value="P:vesicle transport along microtubule"/>
    <property type="evidence" value="ECO:0000250"/>
    <property type="project" value="UniProtKB"/>
</dbReference>
<dbReference type="CDD" id="cd22705">
    <property type="entry name" value="FHA_KIF1"/>
    <property type="match status" value="1"/>
</dbReference>
<dbReference type="CDD" id="cd01365">
    <property type="entry name" value="KISc_KIF1A_KIF1B"/>
    <property type="match status" value="1"/>
</dbReference>
<dbReference type="CDD" id="cd01233">
    <property type="entry name" value="PH_KIFIA_KIFIB"/>
    <property type="match status" value="1"/>
</dbReference>
<dbReference type="FunFam" id="2.60.200.20:FF:000001">
    <property type="entry name" value="Kinesin family member 1B"/>
    <property type="match status" value="1"/>
</dbReference>
<dbReference type="FunFam" id="3.40.850.10:FF:000004">
    <property type="entry name" value="Kinesin-like protein isoform 2"/>
    <property type="match status" value="1"/>
</dbReference>
<dbReference type="FunFam" id="2.30.29.30:FF:000204">
    <property type="entry name" value="kinesin-like protein unc-104 isoform X6"/>
    <property type="match status" value="1"/>
</dbReference>
<dbReference type="Gene3D" id="2.60.200.20">
    <property type="match status" value="1"/>
</dbReference>
<dbReference type="Gene3D" id="6.10.250.2520">
    <property type="match status" value="1"/>
</dbReference>
<dbReference type="Gene3D" id="3.40.850.10">
    <property type="entry name" value="Kinesin motor domain"/>
    <property type="match status" value="1"/>
</dbReference>
<dbReference type="Gene3D" id="2.30.29.30">
    <property type="entry name" value="Pleckstrin-homology domain (PH domain)/Phosphotyrosine-binding domain (PTB)"/>
    <property type="match status" value="1"/>
</dbReference>
<dbReference type="InterPro" id="IPR000253">
    <property type="entry name" value="FHA_dom"/>
</dbReference>
<dbReference type="InterPro" id="IPR022164">
    <property type="entry name" value="Kinesin-like"/>
</dbReference>
<dbReference type="InterPro" id="IPR022140">
    <property type="entry name" value="Kinesin-like_KIF1-typ"/>
</dbReference>
<dbReference type="InterPro" id="IPR032405">
    <property type="entry name" value="Kinesin_assoc"/>
</dbReference>
<dbReference type="InterPro" id="IPR019821">
    <property type="entry name" value="Kinesin_motor_CS"/>
</dbReference>
<dbReference type="InterPro" id="IPR001752">
    <property type="entry name" value="Kinesin_motor_dom"/>
</dbReference>
<dbReference type="InterPro" id="IPR036961">
    <property type="entry name" value="Kinesin_motor_dom_sf"/>
</dbReference>
<dbReference type="InterPro" id="IPR027417">
    <property type="entry name" value="P-loop_NTPase"/>
</dbReference>
<dbReference type="InterPro" id="IPR011993">
    <property type="entry name" value="PH-like_dom_sf"/>
</dbReference>
<dbReference type="InterPro" id="IPR001849">
    <property type="entry name" value="PH_domain"/>
</dbReference>
<dbReference type="InterPro" id="IPR049780">
    <property type="entry name" value="PH_KIFIA_KIFIB"/>
</dbReference>
<dbReference type="InterPro" id="IPR008984">
    <property type="entry name" value="SMAD_FHA_dom_sf"/>
</dbReference>
<dbReference type="PANTHER" id="PTHR47117:SF9">
    <property type="entry name" value="KINESIN-LIKE PROTEIN KIF1C ISOFORM X1"/>
    <property type="match status" value="1"/>
</dbReference>
<dbReference type="PANTHER" id="PTHR47117">
    <property type="entry name" value="STAR-RELATED LIPID TRANSFER PROTEIN 9"/>
    <property type="match status" value="1"/>
</dbReference>
<dbReference type="Pfam" id="PF12473">
    <property type="entry name" value="DUF3694"/>
    <property type="match status" value="1"/>
</dbReference>
<dbReference type="Pfam" id="PF00498">
    <property type="entry name" value="FHA"/>
    <property type="match status" value="1"/>
</dbReference>
<dbReference type="Pfam" id="PF12423">
    <property type="entry name" value="KIF1B"/>
    <property type="match status" value="1"/>
</dbReference>
<dbReference type="Pfam" id="PF00225">
    <property type="entry name" value="Kinesin"/>
    <property type="match status" value="1"/>
</dbReference>
<dbReference type="Pfam" id="PF16183">
    <property type="entry name" value="Kinesin_assoc"/>
    <property type="match status" value="2"/>
</dbReference>
<dbReference type="Pfam" id="PF00169">
    <property type="entry name" value="PH"/>
    <property type="match status" value="1"/>
</dbReference>
<dbReference type="PRINTS" id="PR00380">
    <property type="entry name" value="KINESINHEAVY"/>
</dbReference>
<dbReference type="SMART" id="SM00240">
    <property type="entry name" value="FHA"/>
    <property type="match status" value="1"/>
</dbReference>
<dbReference type="SMART" id="SM00129">
    <property type="entry name" value="KISc"/>
    <property type="match status" value="1"/>
</dbReference>
<dbReference type="SMART" id="SM00233">
    <property type="entry name" value="PH"/>
    <property type="match status" value="1"/>
</dbReference>
<dbReference type="SUPFAM" id="SSF52540">
    <property type="entry name" value="P-loop containing nucleoside triphosphate hydrolases"/>
    <property type="match status" value="1"/>
</dbReference>
<dbReference type="SUPFAM" id="SSF50729">
    <property type="entry name" value="PH domain-like"/>
    <property type="match status" value="1"/>
</dbReference>
<dbReference type="SUPFAM" id="SSF49879">
    <property type="entry name" value="SMAD/FHA domain"/>
    <property type="match status" value="1"/>
</dbReference>
<dbReference type="PROSITE" id="PS00411">
    <property type="entry name" value="KINESIN_MOTOR_1"/>
    <property type="match status" value="1"/>
</dbReference>
<dbReference type="PROSITE" id="PS50067">
    <property type="entry name" value="KINESIN_MOTOR_2"/>
    <property type="match status" value="1"/>
</dbReference>
<dbReference type="PROSITE" id="PS50003">
    <property type="entry name" value="PH_DOMAIN"/>
    <property type="match status" value="1"/>
</dbReference>
<gene>
    <name evidence="1" type="primary">unc-104</name>
    <name type="ORF">GA21168</name>
</gene>
<accession>Q28WQ1</accession>
<keyword id="KW-0067">ATP-binding</keyword>
<keyword id="KW-0175">Coiled coil</keyword>
<keyword id="KW-0963">Cytoplasm</keyword>
<keyword id="KW-0206">Cytoskeleton</keyword>
<keyword id="KW-0493">Microtubule</keyword>
<keyword id="KW-0505">Motor protein</keyword>
<keyword id="KW-0547">Nucleotide-binding</keyword>
<keyword id="KW-1185">Reference proteome</keyword>
<sequence length="1671" mass="189344">MSSVKVAVRVRPFNSREIGRESKCIIEMTGATTAITNPKVPPNTSEAVKRFNFDYSYWSHDPRDSDFSTQTMVYKDIGEEMLQHSFDGYNVCIFAYGQTGAGKSYTMMGRQEEQQEGIIPMICQDLFTRIHDTETDELKYSVEVSYMEIYCERVRDLLNPKNKGNLRVREHPLLGPYVEDLSKLAVTDYQDIHDLIDEGNKARTVAATNMNETSSRSHAVFTIFFTQRRHDTMTDLTTEKVSKISLVDLAGSERADSTGAKGTRLKEGANINKSLTTLGKVISALAEVASKKKHNKKADFIPYRDSALTWLLRENLGGNSKTAMIAAISPADINYDETLSTLRYADRAKQIVCKAVVNEDANAKLIRELKEEIQKLRDLLKAEGIEVQEEDELNKSTTGIKSPSKSRNRNGSTTEMAVDQLQASEKLIAELNETWEEKLKRTEEIRLQREAVFAEMGVAVKEDGITVGVFSPKKTPHLVNLNEDPNLSECLLYYIKDGLTRLGTHEANVPQDIQLSGSHILKEHCTFENRNSTVTLLPHKDAIIFVNGRQLVEPEVLKTGSRVILGKNHVFRFTNPEQARELREKITENEAENEVEKADAPQVDWNFAQCELLEKQGIDLKAEMKKRLDNLEEQYKREKMQADQQFEEQRKTYEARIDALQKQVEEQSMTMSMYSSYSPEDFHQEEDVYNNPMYESCWTAREAGLAAWAFRKWRYHQFTSLRDDLWGNAIFLKEANAISVELKKKVQFQFTLLTDTLYSPLPPELASSVAPLQQEDEFGAPPVSKTLVAVEVTDTKNGATHYWSLEKLRQRLELMREMYHNEAEMSPTSPDYNVESLTGGDPFYDRFPWFRMVGRSFIYLSNLLYPVPLVHKVAIVNERGDVRGYLRIAVQPVLDEESIDFNNGVKQSARLVFNEDDAKPKYRALNEKDDVQRYIDNGGHDSKLEELEDVDSGRGIDSNSASDCPENAEEPGEHLQVGKEFTFRVTVLQATGIGAEYADIFCQFNFLHRHEEAFSTEPVKNSASGAPLGFYHVQNITVPVTKSFIEYLKTQPIMFKIFGHYQTHPLHKDAKQDFVSRPPPRRMLPPSIPISQPVRSPKFGPLPCPPSSTVLAKHDVLVWFEICELAPNGEYVPSVVEHSDDLPCRGLFLLHQGIQRRIRITIVHEPTPEVKWKDINELVVGRIRNTPESSDEQDEDACVLSLGLFPGEVLDVPGDDRSFYRFEAAWDSSLHNSALLNRVSQGGETIYITLSAYLELENCARPAIVTKDLSMVIYGRDARTGPRSLKHLFSGQYRNPEANRLSGVYELSLRRASEAGSPGVQRRQRRVLDTSSTYVRGEENLHGWRPRGDSLIFDHQWELEKLTRLEEVGRMRHLLLLRERLGMDTNPNPTTKTEKDVCNLAARAATSPVHMVIPQSPQTPVKDPQQIMPEREYNQREQDLMLKCLKLVQAGRYAKNEANDTQTQSDVSPSDEGCADMTVSCISSNSMEDNKFVIRRRLCSPDRADAPNGWEAPAPATQPALPLRLYVPELEEIRVSPVVARKGLLNVLEHGGSGWKKRWVTVRRPYVFIYRSEKDPVERAVLNLATAQVECSEDQAAMVKIPNTFSVVTKHRGYLLQTLGDKEVHDWLYAINPLLAGQIKSRLARRTLEPASQTASQIQASSAANANSANK</sequence>
<comment type="function">
    <text evidence="1">Required for presynaptic maturation, has a role in axonal transport of dense-core vesicles carrying synaptic vesicle precursors, components required for the morphological transformation of axonal growth cones to mature boutons.</text>
</comment>
<comment type="subunit">
    <text evidence="2">Monomer.</text>
</comment>
<comment type="subcellular location">
    <subcellularLocation>
        <location evidence="1">Cytoplasm</location>
        <location evidence="1">Cytoskeleton</location>
    </subcellularLocation>
    <text evidence="1">Microtubule-associated.</text>
</comment>
<comment type="similarity">
    <text evidence="5">Belongs to the TRAFAC class myosin-kinesin ATPase superfamily. Kinesin family. Unc-104 subfamily.</text>
</comment>
<comment type="sequence caution" evidence="7">
    <conflict type="erroneous gene model prediction">
        <sequence resource="EMBL-CDS" id="EAL26616"/>
    </conflict>
</comment>
<feature type="chain" id="PRO_0000299497" description="Kinesin-like protein unc-104">
    <location>
        <begin position="1"/>
        <end position="1671"/>
    </location>
</feature>
<feature type="domain" description="Kinesin motor" evidence="5">
    <location>
        <begin position="3"/>
        <end position="351"/>
    </location>
</feature>
<feature type="domain" description="FHA" evidence="3">
    <location>
        <begin position="500"/>
        <end position="566"/>
    </location>
</feature>
<feature type="domain" description="PH" evidence="4">
    <location>
        <begin position="1538"/>
        <end position="1636"/>
    </location>
</feature>
<feature type="region of interest" description="Disordered" evidence="6">
    <location>
        <begin position="391"/>
        <end position="413"/>
    </location>
</feature>
<feature type="region of interest" description="Disordered" evidence="6">
    <location>
        <begin position="949"/>
        <end position="973"/>
    </location>
</feature>
<feature type="coiled-coil region" evidence="3">
    <location>
        <begin position="358"/>
        <end position="437"/>
    </location>
</feature>
<feature type="coiled-coil region" evidence="3">
    <location>
        <begin position="577"/>
        <end position="674"/>
    </location>
</feature>
<feature type="compositionally biased region" description="Polar residues" evidence="6">
    <location>
        <begin position="395"/>
        <end position="413"/>
    </location>
</feature>
<feature type="binding site" evidence="5">
    <location>
        <begin position="97"/>
        <end position="104"/>
    </location>
    <ligand>
        <name>ATP</name>
        <dbReference type="ChEBI" id="CHEBI:30616"/>
    </ligand>
</feature>
<proteinExistence type="inferred from homology"/>
<evidence type="ECO:0000250" key="1">
    <source>
        <dbReference type="UniProtKB" id="A1ZAJ2"/>
    </source>
</evidence>
<evidence type="ECO:0000250" key="2">
    <source>
        <dbReference type="UniProtKB" id="Q60575"/>
    </source>
</evidence>
<evidence type="ECO:0000255" key="3"/>
<evidence type="ECO:0000255" key="4">
    <source>
        <dbReference type="PROSITE-ProRule" id="PRU00145"/>
    </source>
</evidence>
<evidence type="ECO:0000255" key="5">
    <source>
        <dbReference type="PROSITE-ProRule" id="PRU00283"/>
    </source>
</evidence>
<evidence type="ECO:0000256" key="6">
    <source>
        <dbReference type="SAM" id="MobiDB-lite"/>
    </source>
</evidence>
<evidence type="ECO:0000305" key="7"/>
<organism>
    <name type="scientific">Drosophila pseudoobscura pseudoobscura</name>
    <name type="common">Fruit fly</name>
    <dbReference type="NCBI Taxonomy" id="46245"/>
    <lineage>
        <taxon>Eukaryota</taxon>
        <taxon>Metazoa</taxon>
        <taxon>Ecdysozoa</taxon>
        <taxon>Arthropoda</taxon>
        <taxon>Hexapoda</taxon>
        <taxon>Insecta</taxon>
        <taxon>Pterygota</taxon>
        <taxon>Neoptera</taxon>
        <taxon>Endopterygota</taxon>
        <taxon>Diptera</taxon>
        <taxon>Brachycera</taxon>
        <taxon>Muscomorpha</taxon>
        <taxon>Ephydroidea</taxon>
        <taxon>Drosophilidae</taxon>
        <taxon>Drosophila</taxon>
        <taxon>Sophophora</taxon>
    </lineage>
</organism>
<protein>
    <recommendedName>
        <fullName>Kinesin-like protein unc-104</fullName>
    </recommendedName>
</protein>
<reference key="1">
    <citation type="journal article" date="2005" name="Genome Res.">
        <title>Comparative genome sequencing of Drosophila pseudoobscura: chromosomal, gene, and cis-element evolution.</title>
        <authorList>
            <person name="Richards S."/>
            <person name="Liu Y."/>
            <person name="Bettencourt B.R."/>
            <person name="Hradecky P."/>
            <person name="Letovsky S."/>
            <person name="Nielsen R."/>
            <person name="Thornton K."/>
            <person name="Hubisz M.J."/>
            <person name="Chen R."/>
            <person name="Meisel R.P."/>
            <person name="Couronne O."/>
            <person name="Hua S."/>
            <person name="Smith M.A."/>
            <person name="Zhang P."/>
            <person name="Liu J."/>
            <person name="Bussemaker H.J."/>
            <person name="van Batenburg M.F."/>
            <person name="Howells S.L."/>
            <person name="Scherer S.E."/>
            <person name="Sodergren E."/>
            <person name="Matthews B.B."/>
            <person name="Crosby M.A."/>
            <person name="Schroeder A.J."/>
            <person name="Ortiz-Barrientos D."/>
            <person name="Rives C.M."/>
            <person name="Metzker M.L."/>
            <person name="Muzny D.M."/>
            <person name="Scott G."/>
            <person name="Steffen D."/>
            <person name="Wheeler D.A."/>
            <person name="Worley K.C."/>
            <person name="Havlak P."/>
            <person name="Durbin K.J."/>
            <person name="Egan A."/>
            <person name="Gill R."/>
            <person name="Hume J."/>
            <person name="Morgan M.B."/>
            <person name="Miner G."/>
            <person name="Hamilton C."/>
            <person name="Huang Y."/>
            <person name="Waldron L."/>
            <person name="Verduzco D."/>
            <person name="Clerc-Blankenburg K.P."/>
            <person name="Dubchak I."/>
            <person name="Noor M.A.F."/>
            <person name="Anderson W."/>
            <person name="White K.P."/>
            <person name="Clark A.G."/>
            <person name="Schaeffer S.W."/>
            <person name="Gelbart W.M."/>
            <person name="Weinstock G.M."/>
            <person name="Gibbs R.A."/>
        </authorList>
    </citation>
    <scope>NUCLEOTIDE SEQUENCE [LARGE SCALE GENOMIC DNA]</scope>
    <source>
        <strain>MV2-25 / Tucson 14011-0121.94</strain>
    </source>
</reference>
<name>KIF1A_DROPS</name>